<dbReference type="EC" id="2.2.1.3"/>
<dbReference type="EMBL" id="AF086822">
    <property type="protein sequence ID" value="AAC83349.1"/>
    <property type="molecule type" value="Genomic_DNA"/>
</dbReference>
<dbReference type="SMR" id="O93884"/>
<dbReference type="BioCyc" id="MetaCyc:MONOMER-13164"/>
<dbReference type="BRENDA" id="2.2.1.3">
    <property type="organism ID" value="1100"/>
</dbReference>
<dbReference type="GO" id="GO:0005829">
    <property type="term" value="C:cytosol"/>
    <property type="evidence" value="ECO:0007669"/>
    <property type="project" value="TreeGrafter"/>
</dbReference>
<dbReference type="GO" id="GO:0005634">
    <property type="term" value="C:nucleus"/>
    <property type="evidence" value="ECO:0007669"/>
    <property type="project" value="TreeGrafter"/>
</dbReference>
<dbReference type="GO" id="GO:0005777">
    <property type="term" value="C:peroxisome"/>
    <property type="evidence" value="ECO:0007669"/>
    <property type="project" value="UniProtKB-SubCell"/>
</dbReference>
<dbReference type="GO" id="GO:0047896">
    <property type="term" value="F:formaldehyde transketolase activity"/>
    <property type="evidence" value="ECO:0007669"/>
    <property type="project" value="UniProtKB-EC"/>
</dbReference>
<dbReference type="GO" id="GO:0046872">
    <property type="term" value="F:metal ion binding"/>
    <property type="evidence" value="ECO:0007669"/>
    <property type="project" value="UniProtKB-KW"/>
</dbReference>
<dbReference type="GO" id="GO:0004802">
    <property type="term" value="F:transketolase activity"/>
    <property type="evidence" value="ECO:0007669"/>
    <property type="project" value="TreeGrafter"/>
</dbReference>
<dbReference type="GO" id="GO:0015945">
    <property type="term" value="P:methanol metabolic process"/>
    <property type="evidence" value="ECO:0007669"/>
    <property type="project" value="UniProtKB-KW"/>
</dbReference>
<dbReference type="GO" id="GO:0006098">
    <property type="term" value="P:pentose-phosphate shunt"/>
    <property type="evidence" value="ECO:0007669"/>
    <property type="project" value="TreeGrafter"/>
</dbReference>
<dbReference type="CDD" id="cd07033">
    <property type="entry name" value="TPP_PYR_DXS_TK_like"/>
    <property type="match status" value="1"/>
</dbReference>
<dbReference type="CDD" id="cd02012">
    <property type="entry name" value="TPP_TK"/>
    <property type="match status" value="1"/>
</dbReference>
<dbReference type="FunFam" id="3.40.50.970:FF:000004">
    <property type="entry name" value="Transketolase"/>
    <property type="match status" value="1"/>
</dbReference>
<dbReference type="FunFam" id="3.40.50.920:FF:000012">
    <property type="entry name" value="Transketolase, variant 1"/>
    <property type="match status" value="1"/>
</dbReference>
<dbReference type="Gene3D" id="3.40.50.920">
    <property type="match status" value="1"/>
</dbReference>
<dbReference type="Gene3D" id="3.40.50.970">
    <property type="match status" value="2"/>
</dbReference>
<dbReference type="InterPro" id="IPR029061">
    <property type="entry name" value="THDP-binding"/>
</dbReference>
<dbReference type="InterPro" id="IPR009014">
    <property type="entry name" value="Transketo_C/PFOR_II"/>
</dbReference>
<dbReference type="InterPro" id="IPR055152">
    <property type="entry name" value="Transketolase-like_C_2"/>
</dbReference>
<dbReference type="InterPro" id="IPR005475">
    <property type="entry name" value="Transketolase-like_Pyr-bd"/>
</dbReference>
<dbReference type="InterPro" id="IPR020826">
    <property type="entry name" value="Transketolase_BS"/>
</dbReference>
<dbReference type="InterPro" id="IPR049557">
    <property type="entry name" value="Transketolase_CS"/>
</dbReference>
<dbReference type="InterPro" id="IPR033247">
    <property type="entry name" value="Transketolase_fam"/>
</dbReference>
<dbReference type="InterPro" id="IPR005474">
    <property type="entry name" value="Transketolase_N"/>
</dbReference>
<dbReference type="PANTHER" id="PTHR43522">
    <property type="entry name" value="TRANSKETOLASE"/>
    <property type="match status" value="1"/>
</dbReference>
<dbReference type="PANTHER" id="PTHR43522:SF6">
    <property type="entry name" value="TRANSKETOLASE-LIKE PYRIMIDINE-BINDING DOMAIN-CONTAINING PROTEIN-RELATED"/>
    <property type="match status" value="1"/>
</dbReference>
<dbReference type="Pfam" id="PF02779">
    <property type="entry name" value="Transket_pyr"/>
    <property type="match status" value="1"/>
</dbReference>
<dbReference type="Pfam" id="PF22613">
    <property type="entry name" value="Transketolase_C_1"/>
    <property type="match status" value="1"/>
</dbReference>
<dbReference type="Pfam" id="PF00456">
    <property type="entry name" value="Transketolase_N"/>
    <property type="match status" value="1"/>
</dbReference>
<dbReference type="SMART" id="SM00861">
    <property type="entry name" value="Transket_pyr"/>
    <property type="match status" value="1"/>
</dbReference>
<dbReference type="SUPFAM" id="SSF52518">
    <property type="entry name" value="Thiamin diphosphate-binding fold (THDP-binding)"/>
    <property type="match status" value="2"/>
</dbReference>
<dbReference type="SUPFAM" id="SSF52922">
    <property type="entry name" value="TK C-terminal domain-like"/>
    <property type="match status" value="1"/>
</dbReference>
<dbReference type="PROSITE" id="PS00801">
    <property type="entry name" value="TRANSKETOLASE_1"/>
    <property type="match status" value="1"/>
</dbReference>
<dbReference type="PROSITE" id="PS00802">
    <property type="entry name" value="TRANSKETOLASE_2"/>
    <property type="match status" value="1"/>
</dbReference>
<evidence type="ECO:0000250" key="1"/>
<evidence type="ECO:0000255" key="2"/>
<evidence type="ECO:0000269" key="3">
    <source>
    </source>
</evidence>
<evidence type="ECO:0000305" key="4"/>
<comment type="function">
    <text>Involved in assimilation of formaldehyde.</text>
</comment>
<comment type="catalytic activity">
    <reaction>
        <text>D-xylulose 5-phosphate + formaldehyde = dihydroxyacetone + D-glyceraldehyde 3-phosphate</text>
        <dbReference type="Rhea" id="RHEA:24264"/>
        <dbReference type="ChEBI" id="CHEBI:16016"/>
        <dbReference type="ChEBI" id="CHEBI:16842"/>
        <dbReference type="ChEBI" id="CHEBI:57737"/>
        <dbReference type="ChEBI" id="CHEBI:59776"/>
        <dbReference type="EC" id="2.2.1.3"/>
    </reaction>
</comment>
<comment type="cofactor">
    <cofactor evidence="1">
        <name>Mg(2+)</name>
        <dbReference type="ChEBI" id="CHEBI:18420"/>
    </cofactor>
    <cofactor evidence="1">
        <name>Ca(2+)</name>
        <dbReference type="ChEBI" id="CHEBI:29108"/>
    </cofactor>
    <cofactor evidence="1">
        <name>Mn(2+)</name>
        <dbReference type="ChEBI" id="CHEBI:29035"/>
    </cofactor>
    <cofactor evidence="1">
        <name>Co(2+)</name>
        <dbReference type="ChEBI" id="CHEBI:48828"/>
    </cofactor>
    <text evidence="1">Binds 1 Mg(2+) ion per subunit. Can also utilize other divalent metal cations, such as Ca(2+), Mn(2+) and Co(2+).</text>
</comment>
<comment type="cofactor">
    <cofactor evidence="1">
        <name>thiamine diphosphate</name>
        <dbReference type="ChEBI" id="CHEBI:58937"/>
    </cofactor>
    <text evidence="1">Binds 1 thiamine pyrophosphate per subunit.</text>
</comment>
<comment type="subcellular location">
    <subcellularLocation>
        <location evidence="1">Peroxisome</location>
    </subcellularLocation>
</comment>
<comment type="similarity">
    <text evidence="4">Belongs to the transketolase family.</text>
</comment>
<protein>
    <recommendedName>
        <fullName>Dihydroxyacetone synthase</fullName>
        <shortName>DHAS</shortName>
        <ecNumber>2.2.1.3</ecNumber>
    </recommendedName>
    <alternativeName>
        <fullName>Formaldehyde transketolase</fullName>
    </alternativeName>
    <alternativeName>
        <fullName>Glycerone synthase</fullName>
    </alternativeName>
</protein>
<reference key="1">
    <citation type="journal article" date="1998" name="J. Bacteriol.">
        <title>Regulation and physiological role of the DAS1 gene, encoding dihydroxyacetone synthase, in the methylotrophic yeast Candida boidinii.</title>
        <authorList>
            <person name="Sakai Y."/>
            <person name="Nakagawa T."/>
            <person name="Shimase M."/>
            <person name="Kato N."/>
        </authorList>
    </citation>
    <scope>NUCLEOTIDE SEQUENCE [GENOMIC DNA]</scope>
    <scope>PROTEIN SEQUENCE OF 2-22</scope>
    <source>
        <strain>S2</strain>
    </source>
</reference>
<name>DAS_CANBO</name>
<organism>
    <name type="scientific">Candida boidinii</name>
    <name type="common">Yeast</name>
    <dbReference type="NCBI Taxonomy" id="5477"/>
    <lineage>
        <taxon>Eukaryota</taxon>
        <taxon>Fungi</taxon>
        <taxon>Dikarya</taxon>
        <taxon>Ascomycota</taxon>
        <taxon>Saccharomycotina</taxon>
        <taxon>Pichiomycetes</taxon>
        <taxon>Pichiales</taxon>
        <taxon>Pichiaceae</taxon>
        <taxon>Ogataea</taxon>
        <taxon>Ogataea/Candida clade</taxon>
    </lineage>
</organism>
<accession>O93884</accession>
<feature type="initiator methionine" description="Removed" evidence="3">
    <location>
        <position position="1"/>
    </location>
</feature>
<feature type="chain" id="PRO_0000191910" description="Dihydroxyacetone synthase">
    <location>
        <begin position="2"/>
        <end position="706"/>
    </location>
</feature>
<feature type="short sequence motif" description="Microbody targeting signal" evidence="2">
    <location>
        <begin position="704"/>
        <end position="706"/>
    </location>
</feature>
<feature type="active site" description="Proton donor" evidence="1">
    <location>
        <position position="431"/>
    </location>
</feature>
<feature type="binding site" evidence="1">
    <location>
        <position position="76"/>
    </location>
    <ligand>
        <name>thiamine diphosphate</name>
        <dbReference type="ChEBI" id="CHEBI:58937"/>
    </ligand>
</feature>
<feature type="binding site" evidence="1">
    <location>
        <begin position="126"/>
        <end position="128"/>
    </location>
    <ligand>
        <name>thiamine diphosphate</name>
        <dbReference type="ChEBI" id="CHEBI:58937"/>
    </ligand>
</feature>
<feature type="binding site" evidence="1">
    <location>
        <position position="167"/>
    </location>
    <ligand>
        <name>Mg(2+)</name>
        <dbReference type="ChEBI" id="CHEBI:18420"/>
    </ligand>
</feature>
<feature type="binding site" evidence="1">
    <location>
        <position position="197"/>
    </location>
    <ligand>
        <name>Mg(2+)</name>
        <dbReference type="ChEBI" id="CHEBI:18420"/>
    </ligand>
</feature>
<feature type="binding site" evidence="1">
    <location>
        <position position="197"/>
    </location>
    <ligand>
        <name>thiamine diphosphate</name>
        <dbReference type="ChEBI" id="CHEBI:58937"/>
    </ligand>
</feature>
<feature type="binding site" evidence="1">
    <location>
        <position position="199"/>
    </location>
    <ligand>
        <name>Mg(2+)</name>
        <dbReference type="ChEBI" id="CHEBI:18420"/>
    </ligand>
</feature>
<feature type="binding site" evidence="1">
    <location>
        <position position="273"/>
    </location>
    <ligand>
        <name>thiamine diphosphate</name>
        <dbReference type="ChEBI" id="CHEBI:58937"/>
    </ligand>
</feature>
<feature type="binding site" evidence="1">
    <location>
        <position position="431"/>
    </location>
    <ligand>
        <name>thiamine diphosphate</name>
        <dbReference type="ChEBI" id="CHEBI:58937"/>
    </ligand>
</feature>
<feature type="binding site" evidence="1">
    <location>
        <position position="459"/>
    </location>
    <ligand>
        <name>thiamine diphosphate</name>
        <dbReference type="ChEBI" id="CHEBI:58937"/>
    </ligand>
</feature>
<feature type="site" description="Important for catalytic activity" evidence="1">
    <location>
        <position position="36"/>
    </location>
</feature>
<feature type="site" description="Important for catalytic activity" evidence="1">
    <location>
        <position position="273"/>
    </location>
</feature>
<gene>
    <name type="primary">DAS1</name>
</gene>
<keyword id="KW-0903">Direct protein sequencing</keyword>
<keyword id="KW-0460">Magnesium</keyword>
<keyword id="KW-0479">Metal-binding</keyword>
<keyword id="KW-0485">Methanol utilization</keyword>
<keyword id="KW-0576">Peroxisome</keyword>
<keyword id="KW-0786">Thiamine pyrophosphate</keyword>
<keyword id="KW-0808">Transferase</keyword>
<sequence>MALAKAASINDDIHDLTMRAFRCYVLDLVEQYEGGHPGSAMGMVAMGIALWKYTMKYSTNDPTWFNRDRFVLSNGHVCLFQYLFQHLSGLKSMTEKQLKSYHSSDYHSKCPGHPEIENEAVEVTTGPLGQGISNSVGLAIASKNLGALYNKPGYEVVNNTTYCIVGDACLQEGPALESISFAGHLGLDNLVVIYDNNQVCCDGSVDIANTEDISAKFRACNWNVIEVEDGARDVATIVKALELAGAEKNRPTLINVRTIIGTDSAFQNHCAAHGSALGEEGIRELKIKYGFNPSQKFHFPQEVYDFFSDIPAKGDEYVSNWNKLVSSYVKEFPELGAEFQSRVKGELPKNWKSLLPNNLPNEDTATRTSARAMVRALAKDVPNVIAGSADLSVSVNLPWPGSKYFENPQLATQCGLAGDYSGRYVEFGIREHCMCAIANGLAAFNKGTFLPITSSFYMFYLYAAPALRMAALQELKAIHIATHDSIGAGEDGPTHQPIAQSALWRAMPNFYYMRPGDASEVRGLFEKAVELPLSTLFSLSRHEVPQYPGKSSIELAKRGGYVFEDAKDADIQLIGAGSELEQAVKTARILRSRGLKVRILSFPCQRLFDEQSVGYRRSVLQRGKVPTVVIEAYVAYGWERYATAGYTMNTFGKSLPVEDVYEYFGFNPSEISKKIEGYVRAVKANPDLLYEFIDLTEKPKHDQNHL</sequence>
<proteinExistence type="evidence at protein level"/>